<gene>
    <name type="primary">KRT38</name>
    <name type="synonym">HHA8</name>
    <name type="synonym">HKA8</name>
    <name type="synonym">KRTHA8</name>
</gene>
<evidence type="ECO:0000255" key="1">
    <source>
        <dbReference type="PROSITE-ProRule" id="PRU01188"/>
    </source>
</evidence>
<evidence type="ECO:0000269" key="2">
    <source>
    </source>
</evidence>
<evidence type="ECO:0000269" key="3">
    <source>
    </source>
</evidence>
<evidence type="ECO:0000269" key="4">
    <source>
    </source>
</evidence>
<evidence type="ECO:0000269" key="5">
    <source ref="4"/>
</evidence>
<evidence type="ECO:0000305" key="6"/>
<comment type="interaction">
    <interactant intactId="EBI-1047263">
        <id>O76015</id>
    </interactant>
    <interactant intactId="EBI-742038">
        <id>Q9P2A4</id>
        <label>ABI3</label>
    </interactant>
    <organismsDiffer>false</organismsDiffer>
    <experiments>3</experiments>
</comment>
<comment type="interaction">
    <interactant intactId="EBI-1047263">
        <id>O76015</id>
    </interactant>
    <interactant intactId="EBI-10187270">
        <id>Q9Y2J4-4</id>
        <label>AMOTL2</label>
    </interactant>
    <organismsDiffer>false</organismsDiffer>
    <experiments>3</experiments>
</comment>
<comment type="interaction">
    <interactant intactId="EBI-1047263">
        <id>O76015</id>
    </interactant>
    <interactant intactId="EBI-744859">
        <id>Q96IX9</id>
        <label>ANKRD36BP1</label>
    </interactant>
    <organismsDiffer>false</organismsDiffer>
    <experiments>3</experiments>
</comment>
<comment type="interaction">
    <interactant intactId="EBI-1047263">
        <id>O76015</id>
    </interactant>
    <interactant intactId="EBI-745073">
        <id>Q9BXY8</id>
        <label>BEX2</label>
    </interactant>
    <organismsDiffer>false</organismsDiffer>
    <experiments>3</experiments>
</comment>
<comment type="interaction">
    <interactant intactId="EBI-1047263">
        <id>O76015</id>
    </interactant>
    <interactant intactId="EBI-741210">
        <id>Q0VDD7</id>
        <label>BRME1</label>
    </interactant>
    <organismsDiffer>false</organismsDiffer>
    <experiments>3</experiments>
</comment>
<comment type="interaction">
    <interactant intactId="EBI-1047263">
        <id>O76015</id>
    </interactant>
    <interactant intactId="EBI-747505">
        <id>Q8TAB5</id>
        <label>C1orf216</label>
    </interactant>
    <organismsDiffer>false</organismsDiffer>
    <experiments>6</experiments>
</comment>
<comment type="interaction">
    <interactant intactId="EBI-1047263">
        <id>O76015</id>
    </interactant>
    <interactant intactId="EBI-744556">
        <id>Q96HB5</id>
        <label>CCDC120</label>
    </interactant>
    <organismsDiffer>false</organismsDiffer>
    <experiments>3</experiments>
</comment>
<comment type="interaction">
    <interactant intactId="EBI-1047263">
        <id>O76015</id>
    </interactant>
    <interactant intactId="EBI-10749669">
        <id>Q8IYE0</id>
        <label>CCDC146</label>
    </interactant>
    <organismsDiffer>false</organismsDiffer>
    <experiments>5</experiments>
</comment>
<comment type="interaction">
    <interactant intactId="EBI-1047263">
        <id>O76015</id>
    </interactant>
    <interactant intactId="EBI-10247802">
        <id>Q8IYE0-2</id>
        <label>CCDC146</label>
    </interactant>
    <organismsDiffer>false</organismsDiffer>
    <experiments>4</experiments>
</comment>
<comment type="interaction">
    <interactant intactId="EBI-1047263">
        <id>O76015</id>
    </interactant>
    <interactant intactId="EBI-10320732">
        <id>Q9UGN4</id>
        <label>CD300A</label>
    </interactant>
    <organismsDiffer>false</organismsDiffer>
    <experiments>3</experiments>
</comment>
<comment type="interaction">
    <interactant intactId="EBI-1047263">
        <id>O76015</id>
    </interactant>
    <interactant intactId="EBI-10181988">
        <id>Q8IYX8-2</id>
        <label>CEP57L1</label>
    </interactant>
    <organismsDiffer>false</organismsDiffer>
    <experiments>3</experiments>
</comment>
<comment type="interaction">
    <interactant intactId="EBI-1047263">
        <id>O76015</id>
    </interactant>
    <interactant intactId="EBI-9679045">
        <id>Q9NQL9</id>
        <label>DMRT3</label>
    </interactant>
    <organismsDiffer>false</organismsDiffer>
    <experiments>3</experiments>
</comment>
<comment type="interaction">
    <interactant intactId="EBI-1047263">
        <id>O76015</id>
    </interactant>
    <interactant intactId="EBI-11984733">
        <id>O60941-5</id>
        <label>DTNB</label>
    </interactant>
    <organismsDiffer>false</organismsDiffer>
    <experiments>3</experiments>
</comment>
<comment type="interaction">
    <interactant intactId="EBI-1047263">
        <id>O76015</id>
    </interactant>
    <interactant intactId="EBI-1752811">
        <id>Q9BQ89</id>
        <label>FAM110A</label>
    </interactant>
    <organismsDiffer>false</organismsDiffer>
    <experiments>3</experiments>
</comment>
<comment type="interaction">
    <interactant intactId="EBI-1047263">
        <id>O76015</id>
    </interactant>
    <interactant intactId="EBI-6658203">
        <id>Q86YD7</id>
        <label>FAM90A1</label>
    </interactant>
    <organismsDiffer>false</organismsDiffer>
    <experiments>3</experiments>
</comment>
<comment type="interaction">
    <interactant intactId="EBI-1047263">
        <id>O76015</id>
    </interactant>
    <interactant intactId="EBI-374781">
        <id>O76003</id>
        <label>GLRX3</label>
    </interactant>
    <organismsDiffer>false</organismsDiffer>
    <experiments>3</experiments>
</comment>
<comment type="interaction">
    <interactant intactId="EBI-1047263">
        <id>O76015</id>
    </interactant>
    <interactant intactId="EBI-10211741">
        <id>P50151</id>
        <label>GNG10</label>
    </interactant>
    <organismsDiffer>false</organismsDiffer>
    <experiments>6</experiments>
</comment>
<comment type="interaction">
    <interactant intactId="EBI-1047263">
        <id>O76015</id>
    </interactant>
    <interactant intactId="EBI-11427343">
        <id>Q9P2W3</id>
        <label>GNG13</label>
    </interactant>
    <organismsDiffer>false</organismsDiffer>
    <experiments>3</experiments>
</comment>
<comment type="interaction">
    <interactant intactId="EBI-1047263">
        <id>O76015</id>
    </interactant>
    <interactant intactId="EBI-2514791">
        <id>Q96CS2</id>
        <label>HAUS1</label>
    </interactant>
    <organismsDiffer>false</organismsDiffer>
    <experiments>6</experiments>
</comment>
<comment type="interaction">
    <interactant intactId="EBI-1047263">
        <id>O76015</id>
    </interactant>
    <interactant intactId="EBI-308629">
        <id>P56524</id>
        <label>HDAC4</label>
    </interactant>
    <organismsDiffer>false</organismsDiffer>
    <experiments>3</experiments>
</comment>
<comment type="interaction">
    <interactant intactId="EBI-1047263">
        <id>O76015</id>
    </interactant>
    <interactant intactId="EBI-16429135">
        <id>A0A0S2Z4Q4</id>
        <label>HGS</label>
    </interactant>
    <organismsDiffer>false</organismsDiffer>
    <experiments>3</experiments>
</comment>
<comment type="interaction">
    <interactant intactId="EBI-1047263">
        <id>O76015</id>
    </interactant>
    <interactant intactId="EBI-740220">
        <id>O14964</id>
        <label>HGS</label>
    </interactant>
    <organismsDiffer>false</organismsDiffer>
    <experiments>6</experiments>
</comment>
<comment type="interaction">
    <interactant intactId="EBI-1047263">
        <id>O76015</id>
    </interactant>
    <interactant intactId="EBI-713401">
        <id>Q9P0W2</id>
        <label>HMG20B</label>
    </interactant>
    <organismsDiffer>false</organismsDiffer>
    <experiments>6</experiments>
</comment>
<comment type="interaction">
    <interactant intactId="EBI-1047263">
        <id>O76015</id>
    </interactant>
    <interactant intactId="EBI-740785">
        <id>P49639</id>
        <label>HOXA1</label>
    </interactant>
    <organismsDiffer>false</organismsDiffer>
    <experiments>6</experiments>
</comment>
<comment type="interaction">
    <interactant intactId="EBI-1047263">
        <id>O76015</id>
    </interactant>
    <interactant intactId="EBI-12056251">
        <id>Q9ULV5-2</id>
        <label>HSF4</label>
    </interactant>
    <organismsDiffer>false</organismsDiffer>
    <experiments>3</experiments>
</comment>
<comment type="interaction">
    <interactant intactId="EBI-1047263">
        <id>O76015</id>
    </interactant>
    <interactant intactId="EBI-14069005">
        <id>Q9BVG8-5</id>
        <label>KIFC3</label>
    </interactant>
    <organismsDiffer>false</organismsDiffer>
    <experiments>3</experiments>
</comment>
<comment type="interaction">
    <interactant intactId="EBI-1047263">
        <id>O76015</id>
    </interactant>
    <interactant intactId="EBI-6426443">
        <id>Q2WGJ6</id>
        <label>KLHL38</label>
    </interactant>
    <organismsDiffer>false</organismsDiffer>
    <experiments>6</experiments>
</comment>
<comment type="interaction">
    <interactant intactId="EBI-1047263">
        <id>O76015</id>
    </interactant>
    <interactant intactId="EBI-298429">
        <id>P04264</id>
        <label>KRT1</label>
    </interactant>
    <organismsDiffer>false</organismsDiffer>
    <experiments>3</experiments>
</comment>
<comment type="interaction">
    <interactant intactId="EBI-1047263">
        <id>O76015</id>
    </interactant>
    <interactant intactId="EBI-1247312">
        <id>P35908</id>
        <label>KRT2</label>
    </interactant>
    <organismsDiffer>false</organismsDiffer>
    <experiments>11</experiments>
</comment>
<comment type="interaction">
    <interactant intactId="EBI-1047263">
        <id>O76015</id>
    </interactant>
    <interactant intactId="EBI-2430095">
        <id>P12035</id>
        <label>KRT3</label>
    </interactant>
    <organismsDiffer>false</organismsDiffer>
    <experiments>3</experiments>
</comment>
<comment type="interaction">
    <interactant intactId="EBI-1047263">
        <id>O76015</id>
    </interactant>
    <interactant intactId="EBI-2371606">
        <id>P19013</id>
        <label>KRT4</label>
    </interactant>
    <organismsDiffer>false</organismsDiffer>
    <experiments>9</experiments>
</comment>
<comment type="interaction">
    <interactant intactId="EBI-1047263">
        <id>O76015</id>
    </interactant>
    <interactant intactId="EBI-702187">
        <id>P13647</id>
        <label>KRT5</label>
    </interactant>
    <organismsDiffer>false</organismsDiffer>
    <experiments>6</experiments>
</comment>
<comment type="interaction">
    <interactant intactId="EBI-1047263">
        <id>O76015</id>
    </interactant>
    <interactant intactId="EBI-702198">
        <id>P02538</id>
        <label>KRT6A</label>
    </interactant>
    <organismsDiffer>false</organismsDiffer>
    <experiments>14</experiments>
</comment>
<comment type="interaction">
    <interactant intactId="EBI-1047263">
        <id>O76015</id>
    </interactant>
    <interactant intactId="EBI-740907">
        <id>P04259</id>
        <label>KRT6B</label>
    </interactant>
    <organismsDiffer>false</organismsDiffer>
    <experiments>8</experiments>
</comment>
<comment type="interaction">
    <interactant intactId="EBI-1047263">
        <id>O76015</id>
    </interactant>
    <interactant intactId="EBI-2564105">
        <id>P48668</id>
        <label>KRT6C</label>
    </interactant>
    <organismsDiffer>false</organismsDiffer>
    <experiments>6</experiments>
</comment>
<comment type="interaction">
    <interactant intactId="EBI-1047263">
        <id>O76015</id>
    </interactant>
    <interactant intactId="EBI-2952676">
        <id>Q3SY84</id>
        <label>KRT71</label>
    </interactant>
    <organismsDiffer>false</organismsDiffer>
    <experiments>6</experiments>
</comment>
<comment type="interaction">
    <interactant intactId="EBI-1047263">
        <id>O76015</id>
    </interactant>
    <interactant intactId="EBI-1221280">
        <id>Q14CN4</id>
        <label>KRT72</label>
    </interactant>
    <organismsDiffer>false</organismsDiffer>
    <experiments>3</experiments>
</comment>
<comment type="interaction">
    <interactant intactId="EBI-1047263">
        <id>O76015</id>
    </interactant>
    <interactant intactId="EBI-968660">
        <id>Q7RTS7</id>
        <label>KRT74</label>
    </interactant>
    <organismsDiffer>false</organismsDiffer>
    <experiments>3</experiments>
</comment>
<comment type="interaction">
    <interactant intactId="EBI-1047263">
        <id>O76015</id>
    </interactant>
    <interactant intactId="EBI-2949715">
        <id>O95678</id>
        <label>KRT75</label>
    </interactant>
    <organismsDiffer>false</organismsDiffer>
    <experiments>3</experiments>
</comment>
<comment type="interaction">
    <interactant intactId="EBI-1047263">
        <id>O76015</id>
    </interactant>
    <interactant intactId="EBI-2952745">
        <id>Q01546</id>
        <label>KRT76</label>
    </interactant>
    <organismsDiffer>false</organismsDiffer>
    <experiments>3</experiments>
</comment>
<comment type="interaction">
    <interactant intactId="EBI-1047263">
        <id>O76015</id>
    </interactant>
    <interactant intactId="EBI-2514135">
        <id>Q5XKE5</id>
        <label>KRT79</label>
    </interactant>
    <organismsDiffer>false</organismsDiffer>
    <experiments>6</experiments>
</comment>
<comment type="interaction">
    <interactant intactId="EBI-1047263">
        <id>O76015</id>
    </interactant>
    <interactant intactId="EBI-297852">
        <id>P05787</id>
        <label>KRT8</label>
    </interactant>
    <organismsDiffer>false</organismsDiffer>
    <experiments>7</experiments>
</comment>
<comment type="interaction">
    <interactant intactId="EBI-1047263">
        <id>O76015</id>
    </interactant>
    <interactant intactId="EBI-11999246">
        <id>Q6KB66-2</id>
        <label>KRT80</label>
    </interactant>
    <organismsDiffer>false</organismsDiffer>
    <experiments>5</experiments>
</comment>
<comment type="interaction">
    <interactant intactId="EBI-1047263">
        <id>O76015</id>
    </interactant>
    <interactant intactId="EBI-739648">
        <id>Q14533</id>
        <label>KRT81</label>
    </interactant>
    <organismsDiffer>false</organismsDiffer>
    <experiments>10</experiments>
</comment>
<comment type="interaction">
    <interactant intactId="EBI-1047263">
        <id>O76015</id>
    </interactant>
    <interactant intactId="EBI-10221390">
        <id>P78385</id>
        <label>KRT83</label>
    </interactant>
    <organismsDiffer>false</organismsDiffer>
    <experiments>8</experiments>
</comment>
<comment type="interaction">
    <interactant intactId="EBI-1047263">
        <id>O76015</id>
    </interactant>
    <interactant intactId="EBI-1049371">
        <id>P78386</id>
        <label>KRT85</label>
    </interactant>
    <organismsDiffer>false</organismsDiffer>
    <experiments>3</experiments>
</comment>
<comment type="interaction">
    <interactant intactId="EBI-1047263">
        <id>O76015</id>
    </interactant>
    <interactant intactId="EBI-9996498">
        <id>O43790</id>
        <label>KRT86</label>
    </interactant>
    <organismsDiffer>false</organismsDiffer>
    <experiments>3</experiments>
</comment>
<comment type="interaction">
    <interactant intactId="EBI-1047263">
        <id>O76015</id>
    </interactant>
    <interactant intactId="EBI-16429099">
        <id>A0A0S2Z5S9</id>
        <label>LHX4</label>
    </interactant>
    <organismsDiffer>false</organismsDiffer>
    <experiments>3</experiments>
</comment>
<comment type="interaction">
    <interactant intactId="EBI-1047263">
        <id>O76015</id>
    </interactant>
    <interactant intactId="EBI-11742507">
        <id>Q8TAP4-4</id>
        <label>LMO3</label>
    </interactant>
    <organismsDiffer>false</organismsDiffer>
    <experiments>3</experiments>
</comment>
<comment type="interaction">
    <interactant intactId="EBI-1047263">
        <id>O76015</id>
    </interactant>
    <interactant intactId="EBI-2798728">
        <id>P61968</id>
        <label>LMO4</label>
    </interactant>
    <organismsDiffer>false</organismsDiffer>
    <experiments>3</experiments>
</comment>
<comment type="interaction">
    <interactant intactId="EBI-1047263">
        <id>O76015</id>
    </interactant>
    <interactant intactId="EBI-751857">
        <id>O15481</id>
        <label>MAGEB4</label>
    </interactant>
    <organismsDiffer>false</organismsDiffer>
    <experiments>5</experiments>
</comment>
<comment type="interaction">
    <interactant intactId="EBI-1047263">
        <id>O76015</id>
    </interactant>
    <interactant intactId="EBI-947402">
        <id>O60336</id>
        <label>MAPKBP1</label>
    </interactant>
    <organismsDiffer>false</organismsDiffer>
    <experiments>3</experiments>
</comment>
<comment type="interaction">
    <interactant intactId="EBI-1047263">
        <id>O76015</id>
    </interactant>
    <interactant intactId="EBI-346930">
        <id>O00459</id>
        <label>PIK3R2</label>
    </interactant>
    <organismsDiffer>false</organismsDiffer>
    <experiments>5</experiments>
</comment>
<comment type="interaction">
    <interactant intactId="EBI-1047263">
        <id>O76015</id>
    </interactant>
    <interactant intactId="EBI-714158">
        <id>Q13526</id>
        <label>PIN1</label>
    </interactant>
    <organismsDiffer>false</organismsDiffer>
    <experiments>6</experiments>
</comment>
<comment type="interaction">
    <interactant intactId="EBI-1047263">
        <id>O76015</id>
    </interactant>
    <interactant intactId="EBI-17236143">
        <id>Q12837</id>
        <label>POU4F2</label>
    </interactant>
    <organismsDiffer>false</organismsDiffer>
    <experiments>3</experiments>
</comment>
<comment type="interaction">
    <interactant intactId="EBI-1047263">
        <id>O76015</id>
    </interactant>
    <interactant intactId="EBI-359352">
        <id>P25786</id>
        <label>PSMA1</label>
    </interactant>
    <organismsDiffer>false</organismsDiffer>
    <experiments>6</experiments>
</comment>
<comment type="interaction">
    <interactant intactId="EBI-1047263">
        <id>O76015</id>
    </interactant>
    <interactant intactId="EBI-357745">
        <id>P62195</id>
        <label>PSMC5</label>
    </interactant>
    <organismsDiffer>false</organismsDiffer>
    <experiments>6</experiments>
</comment>
<comment type="interaction">
    <interactant intactId="EBI-1047263">
        <id>O76015</id>
    </interactant>
    <interactant intactId="EBI-10234038">
        <id>P43115-12</id>
        <label>PTGER3</label>
    </interactant>
    <organismsDiffer>false</organismsDiffer>
    <experiments>3</experiments>
</comment>
<comment type="interaction">
    <interactant intactId="EBI-1047263">
        <id>O76015</id>
    </interactant>
    <interactant intactId="EBI-10300934">
        <id>Q9BWJ2</id>
        <label>RHPN1-AS1</label>
    </interactant>
    <organismsDiffer>false</organismsDiffer>
    <experiments>3</experiments>
</comment>
<comment type="interaction">
    <interactant intactId="EBI-1047263">
        <id>O76015</id>
    </interactant>
    <interactant intactId="EBI-748391">
        <id>Q9BWG6</id>
        <label>SCNM1</label>
    </interactant>
    <organismsDiffer>false</organismsDiffer>
    <experiments>9</experiments>
</comment>
<comment type="interaction">
    <interactant intactId="EBI-1047263">
        <id>O76015</id>
    </interactant>
    <interactant intactId="EBI-358489">
        <id>Q96GM5</id>
        <label>SMARCD1</label>
    </interactant>
    <organismsDiffer>false</organismsDiffer>
    <experiments>3</experiments>
</comment>
<comment type="interaction">
    <interactant intactId="EBI-1047263">
        <id>O76015</id>
    </interactant>
    <interactant intactId="EBI-12018146">
        <id>Q8IYX1</id>
        <label>TBC1D21</label>
    </interactant>
    <organismsDiffer>false</organismsDiffer>
    <experiments>5</experiments>
</comment>
<comment type="interaction">
    <interactant intactId="EBI-1047263">
        <id>O76015</id>
    </interactant>
    <interactant intactId="EBI-11059915">
        <id>Q8N7C3</id>
        <label>TRIML2</label>
    </interactant>
    <organismsDiffer>false</organismsDiffer>
    <experiments>3</experiments>
</comment>
<comment type="interaction">
    <interactant intactId="EBI-1047263">
        <id>O76015</id>
    </interactant>
    <interactant intactId="EBI-359793">
        <id>P40222</id>
        <label>TXLNA</label>
    </interactant>
    <organismsDiffer>false</organismsDiffer>
    <experiments>7</experiments>
</comment>
<comment type="interaction">
    <interactant intactId="EBI-1047263">
        <id>O76015</id>
    </interactant>
    <interactant intactId="EBI-6116822">
        <id>Q8N3L3</id>
        <label>TXLNB</label>
    </interactant>
    <organismsDiffer>false</organismsDiffer>
    <experiments>9</experiments>
</comment>
<comment type="interaction">
    <interactant intactId="EBI-1047263">
        <id>O76015</id>
    </interactant>
    <interactant intactId="EBI-2825190">
        <id>Q86UY0</id>
        <label>TXNDC5</label>
    </interactant>
    <organismsDiffer>false</organismsDiffer>
    <experiments>3</experiments>
</comment>
<comment type="interaction">
    <interactant intactId="EBI-1047263">
        <id>O76015</id>
    </interactant>
    <interactant intactId="EBI-739895">
        <id>Q8N6Y0</id>
        <label>USHBP1</label>
    </interactant>
    <organismsDiffer>false</organismsDiffer>
    <experiments>6</experiments>
</comment>
<comment type="interaction">
    <interactant intactId="EBI-1047263">
        <id>O76015</id>
    </interactant>
    <interactant intactId="EBI-5457544">
        <id>Q9BRU9</id>
        <label>UTP23</label>
    </interactant>
    <organismsDiffer>false</organismsDiffer>
    <experiments>3</experiments>
</comment>
<comment type="interaction">
    <interactant intactId="EBI-1047263">
        <id>O76015</id>
    </interactant>
    <interactant intactId="EBI-2849569">
        <id>Q9BQ24</id>
        <label>ZFYVE21</label>
    </interactant>
    <organismsDiffer>false</organismsDiffer>
    <experiments>3</experiments>
</comment>
<comment type="interaction">
    <interactant intactId="EBI-1047263">
        <id>O76015</id>
    </interactant>
    <interactant intactId="EBI-717634">
        <id>P17024</id>
        <label>ZNF20</label>
    </interactant>
    <organismsDiffer>false</organismsDiffer>
    <experiments>3</experiments>
</comment>
<comment type="interaction">
    <interactant intactId="EBI-1047263">
        <id>O76015</id>
    </interactant>
    <interactant intactId="EBI-740727">
        <id>Q8TAU3</id>
        <label>ZNF417</label>
    </interactant>
    <organismsDiffer>false</organismsDiffer>
    <experiments>6</experiments>
</comment>
<comment type="interaction">
    <interactant intactId="EBI-1047263">
        <id>O76015</id>
    </interactant>
    <interactant intactId="EBI-6427977">
        <id>Q96SQ5</id>
        <label>ZNF587</label>
    </interactant>
    <organismsDiffer>false</organismsDiffer>
    <experiments>3</experiments>
</comment>
<comment type="interaction">
    <interactant intactId="EBI-1047263">
        <id>O76015</id>
    </interactant>
    <interactant intactId="EBI-9977437">
        <id>A8K2R3</id>
    </interactant>
    <organismsDiffer>false</organismsDiffer>
    <experiments>3</experiments>
</comment>
<comment type="miscellaneous">
    <text>There are two types of hair/microfibrillar keratin, I (acidic) and II (neutral to basic).</text>
</comment>
<comment type="similarity">
    <text evidence="1">Belongs to the intermediate filament family.</text>
</comment>
<proteinExistence type="evidence at protein level"/>
<organism>
    <name type="scientific">Homo sapiens</name>
    <name type="common">Human</name>
    <dbReference type="NCBI Taxonomy" id="9606"/>
    <lineage>
        <taxon>Eukaryota</taxon>
        <taxon>Metazoa</taxon>
        <taxon>Chordata</taxon>
        <taxon>Craniata</taxon>
        <taxon>Vertebrata</taxon>
        <taxon>Euteleostomi</taxon>
        <taxon>Mammalia</taxon>
        <taxon>Eutheria</taxon>
        <taxon>Euarchontoglires</taxon>
        <taxon>Primates</taxon>
        <taxon>Haplorrhini</taxon>
        <taxon>Catarrhini</taxon>
        <taxon>Hominidae</taxon>
        <taxon>Homo</taxon>
    </lineage>
</organism>
<protein>
    <recommendedName>
        <fullName>Keratin, type I cuticular Ha8</fullName>
    </recommendedName>
    <alternativeName>
        <fullName>Hair keratin, type I Ha8</fullName>
    </alternativeName>
    <alternativeName>
        <fullName>Keratin-38</fullName>
        <shortName>K38</shortName>
    </alternativeName>
</protein>
<sequence length="456" mass="50480">MTSSYSSSSCPLGCTMAPGARNVSVSPIDIGCQPGAEANIAPMCLLANVAHANRVRVGSTPLGRPSLCLPPTCHTACPLPGTCHIPGNIGICGAYGENTLNGHEKETMQFLNDRLANYLEKVRQLEQENAELEATLLERSKCHESTVCPDYQSYFHTIEELQQKILCSKAENARLIVQIDNAKLAADDFRIKLESERSLRQLVEADKCGTQKLLDDATLAKADLEAQQESLKEEQLSLKSNHEQEVKILRSQLGEKLRIELDIEPTIDLNRVLGEMRAQYEAMLETNRQDVEQWFQAQSEGISLQDMSCSEELQCCQSEILELRCTVNALEVERQAQHTLKDCLQNSLCEAEDRFGTELAQMQSLISNVEEQLSEIRADLERQNQEYQVLLDVKTRLENEIATYRNLLESEDCKLPCNPCSTSPSCVTAPCAPRPSCGPCTTCGPTCGASTTGSRF</sequence>
<keyword id="KW-0175">Coiled coil</keyword>
<keyword id="KW-0403">Intermediate filament</keyword>
<keyword id="KW-0416">Keratin</keyword>
<keyword id="KW-1267">Proteomics identification</keyword>
<keyword id="KW-1185">Reference proteome</keyword>
<name>KRT38_HUMAN</name>
<dbReference type="EMBL" id="Y16794">
    <property type="protein sequence ID" value="CAA76390.2"/>
    <property type="molecule type" value="Genomic_DNA"/>
</dbReference>
<dbReference type="EMBL" id="AC019349">
    <property type="status" value="NOT_ANNOTATED_CDS"/>
    <property type="molecule type" value="Genomic_DNA"/>
</dbReference>
<dbReference type="EMBL" id="CH471152">
    <property type="protein sequence ID" value="EAW60734.1"/>
    <property type="molecule type" value="Genomic_DNA"/>
</dbReference>
<dbReference type="EMBL" id="BC131715">
    <property type="protein sequence ID" value="AAI31716.1"/>
    <property type="molecule type" value="mRNA"/>
</dbReference>
<dbReference type="EMBL" id="AJ786656">
    <property type="protein sequence ID" value="CAH10351.1"/>
    <property type="molecule type" value="mRNA"/>
</dbReference>
<dbReference type="CCDS" id="CCDS11392.1"/>
<dbReference type="RefSeq" id="NP_006762.3">
    <property type="nucleotide sequence ID" value="NM_006771.3"/>
</dbReference>
<dbReference type="SMR" id="O76015"/>
<dbReference type="BioGRID" id="114234">
    <property type="interactions" value="179"/>
</dbReference>
<dbReference type="FunCoup" id="O76015">
    <property type="interactions" value="163"/>
</dbReference>
<dbReference type="IntAct" id="O76015">
    <property type="interactions" value="170"/>
</dbReference>
<dbReference type="MINT" id="O76015"/>
<dbReference type="STRING" id="9606.ENSP00000246646"/>
<dbReference type="GlyGen" id="O76015">
    <property type="glycosylation" value="2 sites, 1 O-linked glycan (1 site)"/>
</dbReference>
<dbReference type="iPTMnet" id="O76015"/>
<dbReference type="PhosphoSitePlus" id="O76015"/>
<dbReference type="SwissPalm" id="O76015"/>
<dbReference type="BioMuta" id="KRT38"/>
<dbReference type="jPOST" id="O76015"/>
<dbReference type="MassIVE" id="O76015"/>
<dbReference type="PaxDb" id="9606-ENSP00000246646"/>
<dbReference type="PeptideAtlas" id="O76015"/>
<dbReference type="ProteomicsDB" id="50347"/>
<dbReference type="Antibodypedia" id="44473">
    <property type="antibodies" value="57 antibodies from 13 providers"/>
</dbReference>
<dbReference type="DNASU" id="8687"/>
<dbReference type="Ensembl" id="ENST00000246646.4">
    <property type="protein sequence ID" value="ENSP00000246646.3"/>
    <property type="gene ID" value="ENSG00000171360.4"/>
</dbReference>
<dbReference type="GeneID" id="8687"/>
<dbReference type="KEGG" id="hsa:8687"/>
<dbReference type="MANE-Select" id="ENST00000246646.4">
    <property type="protein sequence ID" value="ENSP00000246646.3"/>
    <property type="RefSeq nucleotide sequence ID" value="NM_006771.4"/>
    <property type="RefSeq protein sequence ID" value="NP_006762.3"/>
</dbReference>
<dbReference type="UCSC" id="uc002hwq.2">
    <property type="organism name" value="human"/>
</dbReference>
<dbReference type="AGR" id="HGNC:6456"/>
<dbReference type="CTD" id="8687"/>
<dbReference type="DisGeNET" id="8687"/>
<dbReference type="GeneCards" id="KRT38"/>
<dbReference type="HGNC" id="HGNC:6456">
    <property type="gene designation" value="KRT38"/>
</dbReference>
<dbReference type="HPA" id="ENSG00000171360">
    <property type="expression patterns" value="Tissue enriched (skin)"/>
</dbReference>
<dbReference type="MIM" id="604542">
    <property type="type" value="gene"/>
</dbReference>
<dbReference type="neXtProt" id="NX_O76015"/>
<dbReference type="OpenTargets" id="ENSG00000171360"/>
<dbReference type="PharmGKB" id="PA30245"/>
<dbReference type="VEuPathDB" id="HostDB:ENSG00000171360"/>
<dbReference type="eggNOG" id="ENOG502SIYJ">
    <property type="taxonomic scope" value="Eukaryota"/>
</dbReference>
<dbReference type="GeneTree" id="ENSGT00940000163444"/>
<dbReference type="HOGENOM" id="CLU_012560_8_0_1"/>
<dbReference type="InParanoid" id="O76015"/>
<dbReference type="OMA" id="VKAASMC"/>
<dbReference type="OrthoDB" id="9445296at2759"/>
<dbReference type="PAN-GO" id="O76015">
    <property type="GO annotations" value="3 GO annotations based on evolutionary models"/>
</dbReference>
<dbReference type="PhylomeDB" id="O76015"/>
<dbReference type="TreeFam" id="TF332742"/>
<dbReference type="PathwayCommons" id="O76015"/>
<dbReference type="Reactome" id="R-HSA-6805567">
    <property type="pathway name" value="Keratinization"/>
</dbReference>
<dbReference type="Reactome" id="R-HSA-6809371">
    <property type="pathway name" value="Formation of the cornified envelope"/>
</dbReference>
<dbReference type="SignaLink" id="O76015"/>
<dbReference type="BioGRID-ORCS" id="8687">
    <property type="hits" value="10 hits in 1135 CRISPR screens"/>
</dbReference>
<dbReference type="GenomeRNAi" id="8687"/>
<dbReference type="Pharos" id="O76015">
    <property type="development level" value="Tbio"/>
</dbReference>
<dbReference type="PRO" id="PR:O76015"/>
<dbReference type="Proteomes" id="UP000005640">
    <property type="component" value="Chromosome 17"/>
</dbReference>
<dbReference type="RNAct" id="O76015">
    <property type="molecule type" value="protein"/>
</dbReference>
<dbReference type="Bgee" id="ENSG00000171360">
    <property type="expression patterns" value="Expressed in hair follicle and 28 other cell types or tissues"/>
</dbReference>
<dbReference type="GO" id="GO:0005856">
    <property type="term" value="C:cytoskeleton"/>
    <property type="evidence" value="ECO:0000318"/>
    <property type="project" value="GO_Central"/>
</dbReference>
<dbReference type="GO" id="GO:0005829">
    <property type="term" value="C:cytosol"/>
    <property type="evidence" value="ECO:0000304"/>
    <property type="project" value="Reactome"/>
</dbReference>
<dbReference type="GO" id="GO:0070062">
    <property type="term" value="C:extracellular exosome"/>
    <property type="evidence" value="ECO:0007005"/>
    <property type="project" value="UniProtKB"/>
</dbReference>
<dbReference type="GO" id="GO:0005882">
    <property type="term" value="C:intermediate filament"/>
    <property type="evidence" value="ECO:0007669"/>
    <property type="project" value="UniProtKB-KW"/>
</dbReference>
<dbReference type="GO" id="GO:0005198">
    <property type="term" value="F:structural molecule activity"/>
    <property type="evidence" value="ECO:0000304"/>
    <property type="project" value="ProtInc"/>
</dbReference>
<dbReference type="GO" id="GO:0030855">
    <property type="term" value="P:epithelial cell differentiation"/>
    <property type="evidence" value="ECO:0000318"/>
    <property type="project" value="GO_Central"/>
</dbReference>
<dbReference type="GO" id="GO:0045109">
    <property type="term" value="P:intermediate filament organization"/>
    <property type="evidence" value="ECO:0000318"/>
    <property type="project" value="GO_Central"/>
</dbReference>
<dbReference type="FunFam" id="1.20.5.1160:FF:000002">
    <property type="entry name" value="Type I keratin 10"/>
    <property type="match status" value="1"/>
</dbReference>
<dbReference type="FunFam" id="1.20.5.170:FF:000002">
    <property type="entry name" value="Type I keratin KA11"/>
    <property type="match status" value="1"/>
</dbReference>
<dbReference type="FunFam" id="1.20.5.500:FF:000001">
    <property type="entry name" value="Type II keratin 23"/>
    <property type="match status" value="1"/>
</dbReference>
<dbReference type="Gene3D" id="1.20.5.170">
    <property type="match status" value="1"/>
</dbReference>
<dbReference type="Gene3D" id="1.20.5.500">
    <property type="entry name" value="Single helix bin"/>
    <property type="match status" value="1"/>
</dbReference>
<dbReference type="Gene3D" id="1.20.5.1160">
    <property type="entry name" value="Vasodilator-stimulated phosphoprotein"/>
    <property type="match status" value="1"/>
</dbReference>
<dbReference type="InterPro" id="IPR018039">
    <property type="entry name" value="IF_conserved"/>
</dbReference>
<dbReference type="InterPro" id="IPR039008">
    <property type="entry name" value="IF_rod_dom"/>
</dbReference>
<dbReference type="InterPro" id="IPR002957">
    <property type="entry name" value="Keratin_I"/>
</dbReference>
<dbReference type="PANTHER" id="PTHR23239">
    <property type="entry name" value="INTERMEDIATE FILAMENT"/>
    <property type="match status" value="1"/>
</dbReference>
<dbReference type="PANTHER" id="PTHR23239:SF387">
    <property type="entry name" value="KERATIN, TYPE I CUTICULAR HA8"/>
    <property type="match status" value="1"/>
</dbReference>
<dbReference type="Pfam" id="PF00038">
    <property type="entry name" value="Filament"/>
    <property type="match status" value="1"/>
</dbReference>
<dbReference type="PRINTS" id="PR01248">
    <property type="entry name" value="TYPE1KERATIN"/>
</dbReference>
<dbReference type="SMART" id="SM01391">
    <property type="entry name" value="Filament"/>
    <property type="match status" value="1"/>
</dbReference>
<dbReference type="SUPFAM" id="SSF64593">
    <property type="entry name" value="Intermediate filament protein, coiled coil region"/>
    <property type="match status" value="2"/>
</dbReference>
<dbReference type="PROSITE" id="PS00226">
    <property type="entry name" value="IF_ROD_1"/>
    <property type="match status" value="1"/>
</dbReference>
<dbReference type="PROSITE" id="PS51842">
    <property type="entry name" value="IF_ROD_2"/>
    <property type="match status" value="1"/>
</dbReference>
<feature type="chain" id="PRO_0000063695" description="Keratin, type I cuticular Ha8">
    <location>
        <begin position="1"/>
        <end position="456"/>
    </location>
</feature>
<feature type="domain" description="IF rod" evidence="1">
    <location>
        <begin position="104"/>
        <end position="415"/>
    </location>
</feature>
<feature type="region of interest" description="Head">
    <location>
        <begin position="1"/>
        <end position="104"/>
    </location>
</feature>
<feature type="region of interest" description="Coil 1A">
    <location>
        <begin position="105"/>
        <end position="139"/>
    </location>
</feature>
<feature type="region of interest" description="Linker 1">
    <location>
        <begin position="140"/>
        <end position="150"/>
    </location>
</feature>
<feature type="region of interest" description="Coil 1B">
    <location>
        <begin position="151"/>
        <end position="251"/>
    </location>
</feature>
<feature type="region of interest" description="Linker 12">
    <location>
        <begin position="252"/>
        <end position="267"/>
    </location>
</feature>
<feature type="region of interest" description="Coil 2">
    <location>
        <begin position="268"/>
        <end position="411"/>
    </location>
</feature>
<feature type="region of interest" description="Tail">
    <location>
        <begin position="412"/>
        <end position="456"/>
    </location>
</feature>
<feature type="site" description="Stutter">
    <location>
        <position position="353"/>
    </location>
</feature>
<feature type="sequence variant" id="VAR_055137" description="In dbSNP:rs897416." evidence="2 3 4 5">
    <original>S</original>
    <variation>P</variation>
    <location>
        <position position="423"/>
    </location>
</feature>
<feature type="sequence conflict" description="In Ref. 6; CAH10351." evidence="6" ref="6">
    <original>D</original>
    <variation>G</variation>
    <location>
        <position position="113"/>
    </location>
</feature>
<accession>O76015</accession>
<accession>A2RRM5</accession>
<accession>Q6A164</accession>
<reference key="1">
    <citation type="journal article" date="1998" name="J. Biol. Chem.">
        <title>Characterization of a 190-kilobase pair domain of human type I hair keratin genes.</title>
        <authorList>
            <person name="Rogers M.A."/>
            <person name="Winter H."/>
            <person name="Wolf C."/>
            <person name="Heck M."/>
            <person name="Schweizer J."/>
        </authorList>
    </citation>
    <scope>NUCLEOTIDE SEQUENCE [GENOMIC DNA]</scope>
    <scope>VARIANT PRO-423</scope>
</reference>
<reference key="2">
    <citation type="submission" date="2001-01" db="EMBL/GenBank/DDBJ databases">
        <authorList>
            <person name="Schweizer J."/>
        </authorList>
    </citation>
    <scope>SEQUENCE REVISION</scope>
</reference>
<reference key="3">
    <citation type="journal article" date="2006" name="Nature">
        <title>DNA sequence of human chromosome 17 and analysis of rearrangement in the human lineage.</title>
        <authorList>
            <person name="Zody M.C."/>
            <person name="Garber M."/>
            <person name="Adams D.J."/>
            <person name="Sharpe T."/>
            <person name="Harrow J."/>
            <person name="Lupski J.R."/>
            <person name="Nicholson C."/>
            <person name="Searle S.M."/>
            <person name="Wilming L."/>
            <person name="Young S.K."/>
            <person name="Abouelleil A."/>
            <person name="Allen N.R."/>
            <person name="Bi W."/>
            <person name="Bloom T."/>
            <person name="Borowsky M.L."/>
            <person name="Bugalter B.E."/>
            <person name="Butler J."/>
            <person name="Chang J.L."/>
            <person name="Chen C.-K."/>
            <person name="Cook A."/>
            <person name="Corum B."/>
            <person name="Cuomo C.A."/>
            <person name="de Jong P.J."/>
            <person name="DeCaprio D."/>
            <person name="Dewar K."/>
            <person name="FitzGerald M."/>
            <person name="Gilbert J."/>
            <person name="Gibson R."/>
            <person name="Gnerre S."/>
            <person name="Goldstein S."/>
            <person name="Grafham D.V."/>
            <person name="Grocock R."/>
            <person name="Hafez N."/>
            <person name="Hagopian D.S."/>
            <person name="Hart E."/>
            <person name="Norman C.H."/>
            <person name="Humphray S."/>
            <person name="Jaffe D.B."/>
            <person name="Jones M."/>
            <person name="Kamal M."/>
            <person name="Khodiyar V.K."/>
            <person name="LaButti K."/>
            <person name="Laird G."/>
            <person name="Lehoczky J."/>
            <person name="Liu X."/>
            <person name="Lokyitsang T."/>
            <person name="Loveland J."/>
            <person name="Lui A."/>
            <person name="Macdonald P."/>
            <person name="Major J.E."/>
            <person name="Matthews L."/>
            <person name="Mauceli E."/>
            <person name="McCarroll S.A."/>
            <person name="Mihalev A.H."/>
            <person name="Mudge J."/>
            <person name="Nguyen C."/>
            <person name="Nicol R."/>
            <person name="O'Leary S.B."/>
            <person name="Osoegawa K."/>
            <person name="Schwartz D.C."/>
            <person name="Shaw-Smith C."/>
            <person name="Stankiewicz P."/>
            <person name="Steward C."/>
            <person name="Swarbreck D."/>
            <person name="Venkataraman V."/>
            <person name="Whittaker C.A."/>
            <person name="Yang X."/>
            <person name="Zimmer A.R."/>
            <person name="Bradley A."/>
            <person name="Hubbard T."/>
            <person name="Birren B.W."/>
            <person name="Rogers J."/>
            <person name="Lander E.S."/>
            <person name="Nusbaum C."/>
        </authorList>
    </citation>
    <scope>NUCLEOTIDE SEQUENCE [LARGE SCALE GENOMIC DNA]</scope>
</reference>
<reference key="4">
    <citation type="submission" date="2005-07" db="EMBL/GenBank/DDBJ databases">
        <authorList>
            <person name="Mural R.J."/>
            <person name="Istrail S."/>
            <person name="Sutton G.G."/>
            <person name="Florea L."/>
            <person name="Halpern A.L."/>
            <person name="Mobarry C.M."/>
            <person name="Lippert R."/>
            <person name="Walenz B."/>
            <person name="Shatkay H."/>
            <person name="Dew I."/>
            <person name="Miller J.R."/>
            <person name="Flanigan M.J."/>
            <person name="Edwards N.J."/>
            <person name="Bolanos R."/>
            <person name="Fasulo D."/>
            <person name="Halldorsson B.V."/>
            <person name="Hannenhalli S."/>
            <person name="Turner R."/>
            <person name="Yooseph S."/>
            <person name="Lu F."/>
            <person name="Nusskern D.R."/>
            <person name="Shue B.C."/>
            <person name="Zheng X.H."/>
            <person name="Zhong F."/>
            <person name="Delcher A.L."/>
            <person name="Huson D.H."/>
            <person name="Kravitz S.A."/>
            <person name="Mouchard L."/>
            <person name="Reinert K."/>
            <person name="Remington K.A."/>
            <person name="Clark A.G."/>
            <person name="Waterman M.S."/>
            <person name="Eichler E.E."/>
            <person name="Adams M.D."/>
            <person name="Hunkapiller M.W."/>
            <person name="Myers E.W."/>
            <person name="Venter J.C."/>
        </authorList>
    </citation>
    <scope>NUCLEOTIDE SEQUENCE [LARGE SCALE GENOMIC DNA]</scope>
    <scope>VARIANT PRO-423</scope>
</reference>
<reference key="5">
    <citation type="journal article" date="2004" name="Genome Res.">
        <title>The status, quality, and expansion of the NIH full-length cDNA project: the Mammalian Gene Collection (MGC).</title>
        <authorList>
            <consortium name="The MGC Project Team"/>
        </authorList>
    </citation>
    <scope>NUCLEOTIDE SEQUENCE [LARGE SCALE MRNA]</scope>
    <scope>VARIANT PRO-423</scope>
</reference>
<reference key="6">
    <citation type="journal article" date="2004" name="Differentiation">
        <title>The human type I keratin gene family: characterization of new hair follicle specific members and evaluation of the chromosome 17q21.2 gene domain.</title>
        <authorList>
            <person name="Rogers M.A."/>
            <person name="Winter H."/>
            <person name="Langbein L."/>
            <person name="Bleiler R."/>
            <person name="Schweizer J."/>
        </authorList>
    </citation>
    <scope>NUCLEOTIDE SEQUENCE [MRNA] OF 18-456</scope>
    <scope>VARIANT PRO-423</scope>
    <source>
        <tissue>Scalp</tissue>
    </source>
</reference>